<evidence type="ECO:0000255" key="1">
    <source>
        <dbReference type="HAMAP-Rule" id="MF_01358"/>
    </source>
</evidence>
<accession>Q8F7Q2</accession>
<organism>
    <name type="scientific">Leptospira interrogans serogroup Icterohaemorrhagiae serovar Lai (strain 56601)</name>
    <dbReference type="NCBI Taxonomy" id="189518"/>
    <lineage>
        <taxon>Bacteria</taxon>
        <taxon>Pseudomonadati</taxon>
        <taxon>Spirochaetota</taxon>
        <taxon>Spirochaetia</taxon>
        <taxon>Leptospirales</taxon>
        <taxon>Leptospiraceae</taxon>
        <taxon>Leptospira</taxon>
    </lineage>
</organism>
<feature type="chain" id="PRO_0000357838" description="NADH-quinone oxidoreductase subunit D">
    <location>
        <begin position="1"/>
        <end position="405"/>
    </location>
</feature>
<keyword id="KW-0997">Cell inner membrane</keyword>
<keyword id="KW-1003">Cell membrane</keyword>
<keyword id="KW-0472">Membrane</keyword>
<keyword id="KW-0520">NAD</keyword>
<keyword id="KW-0874">Quinone</keyword>
<keyword id="KW-1185">Reference proteome</keyword>
<keyword id="KW-1278">Translocase</keyword>
<keyword id="KW-0813">Transport</keyword>
<keyword id="KW-0830">Ubiquinone</keyword>
<sequence>MMYEKTAEHFEQKYKNLPEGHLLVNLGPSHPATHGILQNVIQIDGERIVEAESVIGYVHRCFEKLGERYTYNQFLVCTDRMNYVSTPLNNIGWILAVEKMMQIEVPDRVTYVRMIISELSRIIDHIICTGILGVDLGAFSGMLHLFHHRENIYQIIEKLTGARLTTTFCRIGGLEKDIYPDFVKEVKLVCKGLKPAIEEFNSLLLKNKIFLGRTEGIGGISAENAIAYGYTGPNLRAAGVDWDVRKDEPYLFYDKVDFDIPIGEDGSVLHRSLVRMEEMRQSIRIIEQLVDGIPSGPWHADLPHAYLPEKHKVYNNMEELIYHFKIIMHGVKVPPGEYYMATEAANGELGFYIVSEGEKSPWRVHVRRPCFWYYQSFAELVRGGLLADSVATMSSLNVIAGELDC</sequence>
<gene>
    <name evidence="1" type="primary">nuoD</name>
    <name type="ordered locus">LA_0892</name>
</gene>
<protein>
    <recommendedName>
        <fullName evidence="1">NADH-quinone oxidoreductase subunit D</fullName>
        <ecNumber evidence="1">7.1.1.-</ecNumber>
    </recommendedName>
    <alternativeName>
        <fullName evidence="1">NADH dehydrogenase I subunit D</fullName>
    </alternativeName>
    <alternativeName>
        <fullName evidence="1">NDH-1 subunit D</fullName>
    </alternativeName>
</protein>
<comment type="function">
    <text evidence="1">NDH-1 shuttles electrons from NADH, via FMN and iron-sulfur (Fe-S) centers, to quinones in the respiratory chain. The immediate electron acceptor for the enzyme in this species is believed to be ubiquinone. Couples the redox reaction to proton translocation (for every two electrons transferred, four hydrogen ions are translocated across the cytoplasmic membrane), and thus conserves the redox energy in a proton gradient.</text>
</comment>
<comment type="catalytic activity">
    <reaction evidence="1">
        <text>a quinone + NADH + 5 H(+)(in) = a quinol + NAD(+) + 4 H(+)(out)</text>
        <dbReference type="Rhea" id="RHEA:57888"/>
        <dbReference type="ChEBI" id="CHEBI:15378"/>
        <dbReference type="ChEBI" id="CHEBI:24646"/>
        <dbReference type="ChEBI" id="CHEBI:57540"/>
        <dbReference type="ChEBI" id="CHEBI:57945"/>
        <dbReference type="ChEBI" id="CHEBI:132124"/>
    </reaction>
</comment>
<comment type="subunit">
    <text evidence="1">NDH-1 is composed of 14 different subunits. Subunits NuoB, C, D, E, F, and G constitute the peripheral sector of the complex.</text>
</comment>
<comment type="subcellular location">
    <subcellularLocation>
        <location evidence="1">Cell inner membrane</location>
        <topology evidence="1">Peripheral membrane protein</topology>
        <orientation evidence="1">Cytoplasmic side</orientation>
    </subcellularLocation>
</comment>
<comment type="similarity">
    <text evidence="1">Belongs to the complex I 49 kDa subunit family.</text>
</comment>
<dbReference type="EC" id="7.1.1.-" evidence="1"/>
<dbReference type="EMBL" id="AE010300">
    <property type="protein sequence ID" value="AAN48091.1"/>
    <property type="molecule type" value="Genomic_DNA"/>
</dbReference>
<dbReference type="RefSeq" id="NP_711073.1">
    <property type="nucleotide sequence ID" value="NC_004342.2"/>
</dbReference>
<dbReference type="RefSeq" id="WP_000990075.1">
    <property type="nucleotide sequence ID" value="NC_004342.2"/>
</dbReference>
<dbReference type="SMR" id="Q8F7Q2"/>
<dbReference type="FunCoup" id="Q8F7Q2">
    <property type="interactions" value="325"/>
</dbReference>
<dbReference type="STRING" id="189518.LA_0892"/>
<dbReference type="PaxDb" id="189518-LA_0892"/>
<dbReference type="EnsemblBacteria" id="AAN48091">
    <property type="protein sequence ID" value="AAN48091"/>
    <property type="gene ID" value="LA_0892"/>
</dbReference>
<dbReference type="KEGG" id="lil:LA_0892"/>
<dbReference type="PATRIC" id="fig|189518.3.peg.894"/>
<dbReference type="HOGENOM" id="CLU_015134_1_2_12"/>
<dbReference type="InParanoid" id="Q8F7Q2"/>
<dbReference type="OrthoDB" id="9801496at2"/>
<dbReference type="Proteomes" id="UP000001408">
    <property type="component" value="Chromosome I"/>
</dbReference>
<dbReference type="GO" id="GO:0005886">
    <property type="term" value="C:plasma membrane"/>
    <property type="evidence" value="ECO:0007669"/>
    <property type="project" value="UniProtKB-SubCell"/>
</dbReference>
<dbReference type="GO" id="GO:0051287">
    <property type="term" value="F:NAD binding"/>
    <property type="evidence" value="ECO:0007669"/>
    <property type="project" value="InterPro"/>
</dbReference>
<dbReference type="GO" id="GO:0050136">
    <property type="term" value="F:NADH:ubiquinone reductase (non-electrogenic) activity"/>
    <property type="evidence" value="ECO:0007669"/>
    <property type="project" value="UniProtKB-UniRule"/>
</dbReference>
<dbReference type="GO" id="GO:0048038">
    <property type="term" value="F:quinone binding"/>
    <property type="evidence" value="ECO:0007669"/>
    <property type="project" value="UniProtKB-KW"/>
</dbReference>
<dbReference type="Gene3D" id="1.10.645.10">
    <property type="entry name" value="Cytochrome-c3 Hydrogenase, chain B"/>
    <property type="match status" value="1"/>
</dbReference>
<dbReference type="HAMAP" id="MF_01358">
    <property type="entry name" value="NDH1_NuoD"/>
    <property type="match status" value="1"/>
</dbReference>
<dbReference type="InterPro" id="IPR001135">
    <property type="entry name" value="NADH_Q_OxRdtase_suD"/>
</dbReference>
<dbReference type="InterPro" id="IPR022885">
    <property type="entry name" value="NDH1_su_D/H"/>
</dbReference>
<dbReference type="InterPro" id="IPR029014">
    <property type="entry name" value="NiFe-Hase_large"/>
</dbReference>
<dbReference type="NCBIfam" id="NF004739">
    <property type="entry name" value="PRK06075.1"/>
    <property type="match status" value="1"/>
</dbReference>
<dbReference type="PANTHER" id="PTHR11993:SF10">
    <property type="entry name" value="NADH DEHYDROGENASE [UBIQUINONE] IRON-SULFUR PROTEIN 2, MITOCHONDRIAL"/>
    <property type="match status" value="1"/>
</dbReference>
<dbReference type="PANTHER" id="PTHR11993">
    <property type="entry name" value="NADH-UBIQUINONE OXIDOREDUCTASE 49 KDA SUBUNIT"/>
    <property type="match status" value="1"/>
</dbReference>
<dbReference type="Pfam" id="PF00346">
    <property type="entry name" value="Complex1_49kDa"/>
    <property type="match status" value="1"/>
</dbReference>
<dbReference type="SUPFAM" id="SSF56762">
    <property type="entry name" value="HydB/Nqo4-like"/>
    <property type="match status" value="1"/>
</dbReference>
<name>NUOD_LEPIN</name>
<reference key="1">
    <citation type="journal article" date="2003" name="Nature">
        <title>Unique physiological and pathogenic features of Leptospira interrogans revealed by whole-genome sequencing.</title>
        <authorList>
            <person name="Ren S.-X."/>
            <person name="Fu G."/>
            <person name="Jiang X.-G."/>
            <person name="Zeng R."/>
            <person name="Miao Y.-G."/>
            <person name="Xu H."/>
            <person name="Zhang Y.-X."/>
            <person name="Xiong H."/>
            <person name="Lu G."/>
            <person name="Lu L.-F."/>
            <person name="Jiang H.-Q."/>
            <person name="Jia J."/>
            <person name="Tu Y.-F."/>
            <person name="Jiang J.-X."/>
            <person name="Gu W.-Y."/>
            <person name="Zhang Y.-Q."/>
            <person name="Cai Z."/>
            <person name="Sheng H.-H."/>
            <person name="Yin H.-F."/>
            <person name="Zhang Y."/>
            <person name="Zhu G.-F."/>
            <person name="Wan M."/>
            <person name="Huang H.-L."/>
            <person name="Qian Z."/>
            <person name="Wang S.-Y."/>
            <person name="Ma W."/>
            <person name="Yao Z.-J."/>
            <person name="Shen Y."/>
            <person name="Qiang B.-Q."/>
            <person name="Xia Q.-C."/>
            <person name="Guo X.-K."/>
            <person name="Danchin A."/>
            <person name="Saint Girons I."/>
            <person name="Somerville R.L."/>
            <person name="Wen Y.-M."/>
            <person name="Shi M.-H."/>
            <person name="Chen Z."/>
            <person name="Xu J.-G."/>
            <person name="Zhao G.-P."/>
        </authorList>
    </citation>
    <scope>NUCLEOTIDE SEQUENCE [LARGE SCALE GENOMIC DNA]</scope>
    <source>
        <strain>56601</strain>
    </source>
</reference>
<proteinExistence type="inferred from homology"/>